<organism>
    <name type="scientific">Cupriavidus taiwanensis (strain DSM 17343 / BCRC 17206 / CCUG 44338 / CIP 107171 / LMG 19424 / R1)</name>
    <name type="common">Ralstonia taiwanensis (strain LMG 19424)</name>
    <dbReference type="NCBI Taxonomy" id="977880"/>
    <lineage>
        <taxon>Bacteria</taxon>
        <taxon>Pseudomonadati</taxon>
        <taxon>Pseudomonadota</taxon>
        <taxon>Betaproteobacteria</taxon>
        <taxon>Burkholderiales</taxon>
        <taxon>Burkholderiaceae</taxon>
        <taxon>Cupriavidus</taxon>
    </lineage>
</organism>
<evidence type="ECO:0000255" key="1">
    <source>
        <dbReference type="HAMAP-Rule" id="MF_00296"/>
    </source>
</evidence>
<comment type="function">
    <text evidence="1">Transfers a succinyl group from succinyl-CoA to L-homoserine, forming succinyl-L-homoserine.</text>
</comment>
<comment type="catalytic activity">
    <reaction evidence="1">
        <text>L-homoserine + succinyl-CoA = O-succinyl-L-homoserine + CoA</text>
        <dbReference type="Rhea" id="RHEA:22008"/>
        <dbReference type="ChEBI" id="CHEBI:57287"/>
        <dbReference type="ChEBI" id="CHEBI:57292"/>
        <dbReference type="ChEBI" id="CHEBI:57476"/>
        <dbReference type="ChEBI" id="CHEBI:57661"/>
        <dbReference type="EC" id="2.3.1.46"/>
    </reaction>
</comment>
<comment type="pathway">
    <text evidence="1">Amino-acid biosynthesis; L-methionine biosynthesis via de novo pathway; O-succinyl-L-homoserine from L-homoserine: step 1/1.</text>
</comment>
<comment type="subunit">
    <text evidence="1">Homodimer.</text>
</comment>
<comment type="subcellular location">
    <subcellularLocation>
        <location evidence="1">Cytoplasm</location>
    </subcellularLocation>
</comment>
<comment type="similarity">
    <text evidence="1">Belongs to the AB hydrolase superfamily. MetX family.</text>
</comment>
<keyword id="KW-0012">Acyltransferase</keyword>
<keyword id="KW-0028">Amino-acid biosynthesis</keyword>
<keyword id="KW-0963">Cytoplasm</keyword>
<keyword id="KW-0486">Methionine biosynthesis</keyword>
<keyword id="KW-0808">Transferase</keyword>
<name>METXS_CUPTR</name>
<sequence length="393" mass="43160">MTDVALPTAAPAAFDLPPDSVGVVAPQRMHFAEPLKLRNGSSIAGYDLMVETYGTLNADRSNAVLVCHALNASHHVAGVYADDRRNVGWWDNMVGPGKPLDTNRFFVIGINNLGSCFGSTGPMSLNPATGAPYGAAFPVVTVEDWVNAQARVADAFGITQFAAVMGGSLGGMQAVAWSLMYPDRLRHCIVIASTPKLSAQNIAFNEVARSAILSDPDFHGGNYYAHGVKPKRGLRVARMIGHITYLSDEDMAEKFGRELKSEDIRFSFDVEFQVESYLRYQGDKFAEYFDANTYLLITRALDYFDPALAHGGDLTRAMAQTQASFLVASFGTDWRFAPSRSRELVKALLDNKRPVSYAEIDAPHGHDAFLLDDPRYHNLMRAYYDRIAEEIGA</sequence>
<proteinExistence type="inferred from homology"/>
<reference key="1">
    <citation type="journal article" date="2008" name="Genome Res.">
        <title>Genome sequence of the beta-rhizobium Cupriavidus taiwanensis and comparative genomics of rhizobia.</title>
        <authorList>
            <person name="Amadou C."/>
            <person name="Pascal G."/>
            <person name="Mangenot S."/>
            <person name="Glew M."/>
            <person name="Bontemps C."/>
            <person name="Capela D."/>
            <person name="Carrere S."/>
            <person name="Cruveiller S."/>
            <person name="Dossat C."/>
            <person name="Lajus A."/>
            <person name="Marchetti M."/>
            <person name="Poinsot V."/>
            <person name="Rouy Z."/>
            <person name="Servin B."/>
            <person name="Saad M."/>
            <person name="Schenowitz C."/>
            <person name="Barbe V."/>
            <person name="Batut J."/>
            <person name="Medigue C."/>
            <person name="Masson-Boivin C."/>
        </authorList>
    </citation>
    <scope>NUCLEOTIDE SEQUENCE [LARGE SCALE GENOMIC DNA]</scope>
    <source>
        <strain>DSM 17343 / BCRC 17206 / CCUG 44338 / CIP 107171 / LMG 19424 / R1</strain>
    </source>
</reference>
<gene>
    <name evidence="1" type="primary">metXS</name>
    <name type="ordered locus">RALTA_A0154</name>
</gene>
<protein>
    <recommendedName>
        <fullName evidence="1">Homoserine O-succinyltransferase</fullName>
        <shortName evidence="1">HST</shortName>
        <ecNumber evidence="1">2.3.1.46</ecNumber>
    </recommendedName>
    <alternativeName>
        <fullName evidence="1">Homoserine transsuccinylase</fullName>
        <shortName evidence="1">HTS</shortName>
    </alternativeName>
</protein>
<feature type="chain" id="PRO_1000115222" description="Homoserine O-succinyltransferase">
    <location>
        <begin position="1"/>
        <end position="393"/>
    </location>
</feature>
<feature type="domain" description="AB hydrolase-1" evidence="1">
    <location>
        <begin position="62"/>
        <end position="372"/>
    </location>
</feature>
<feature type="active site" description="Nucleophile" evidence="1">
    <location>
        <position position="168"/>
    </location>
</feature>
<feature type="active site" evidence="1">
    <location>
        <position position="333"/>
    </location>
</feature>
<feature type="active site" evidence="1">
    <location>
        <position position="366"/>
    </location>
</feature>
<feature type="binding site" evidence="1">
    <location>
        <position position="238"/>
    </location>
    <ligand>
        <name>substrate</name>
    </ligand>
</feature>
<feature type="binding site" evidence="1">
    <location>
        <position position="367"/>
    </location>
    <ligand>
        <name>substrate</name>
    </ligand>
</feature>
<feature type="site" description="Important for acyl-CoA specificity" evidence="1">
    <location>
        <position position="335"/>
    </location>
</feature>
<accession>B2AGC8</accession>
<dbReference type="EC" id="2.3.1.46" evidence="1"/>
<dbReference type="EMBL" id="CU633749">
    <property type="protein sequence ID" value="CAP62827.1"/>
    <property type="molecule type" value="Genomic_DNA"/>
</dbReference>
<dbReference type="RefSeq" id="WP_012351495.1">
    <property type="nucleotide sequence ID" value="NC_010528.1"/>
</dbReference>
<dbReference type="SMR" id="B2AGC8"/>
<dbReference type="ESTHER" id="cuppj-metx">
    <property type="family name" value="Homoserine_transacetylase"/>
</dbReference>
<dbReference type="GeneID" id="29760398"/>
<dbReference type="KEGG" id="cti:RALTA_A0154"/>
<dbReference type="eggNOG" id="COG2021">
    <property type="taxonomic scope" value="Bacteria"/>
</dbReference>
<dbReference type="HOGENOM" id="CLU_028760_1_2_4"/>
<dbReference type="BioCyc" id="CTAI977880:RALTA_RS00760-MONOMER"/>
<dbReference type="UniPathway" id="UPA00051">
    <property type="reaction ID" value="UER00075"/>
</dbReference>
<dbReference type="Proteomes" id="UP000001692">
    <property type="component" value="Chromosome 1"/>
</dbReference>
<dbReference type="GO" id="GO:0005737">
    <property type="term" value="C:cytoplasm"/>
    <property type="evidence" value="ECO:0007669"/>
    <property type="project" value="UniProtKB-SubCell"/>
</dbReference>
<dbReference type="GO" id="GO:0004414">
    <property type="term" value="F:homoserine O-acetyltransferase activity"/>
    <property type="evidence" value="ECO:0007669"/>
    <property type="project" value="TreeGrafter"/>
</dbReference>
<dbReference type="GO" id="GO:0008899">
    <property type="term" value="F:homoserine O-succinyltransferase activity"/>
    <property type="evidence" value="ECO:0007669"/>
    <property type="project" value="UniProtKB-UniRule"/>
</dbReference>
<dbReference type="GO" id="GO:0009092">
    <property type="term" value="P:homoserine metabolic process"/>
    <property type="evidence" value="ECO:0007669"/>
    <property type="project" value="TreeGrafter"/>
</dbReference>
<dbReference type="GO" id="GO:0009086">
    <property type="term" value="P:methionine biosynthetic process"/>
    <property type="evidence" value="ECO:0007669"/>
    <property type="project" value="UniProtKB-UniRule"/>
</dbReference>
<dbReference type="FunFam" id="1.10.1740.110:FF:000001">
    <property type="entry name" value="Homoserine O-acetyltransferase"/>
    <property type="match status" value="1"/>
</dbReference>
<dbReference type="Gene3D" id="1.10.1740.110">
    <property type="match status" value="1"/>
</dbReference>
<dbReference type="Gene3D" id="3.40.50.1820">
    <property type="entry name" value="alpha/beta hydrolase"/>
    <property type="match status" value="1"/>
</dbReference>
<dbReference type="HAMAP" id="MF_00296">
    <property type="entry name" value="MetX_acyltransf"/>
    <property type="match status" value="1"/>
</dbReference>
<dbReference type="InterPro" id="IPR000073">
    <property type="entry name" value="AB_hydrolase_1"/>
</dbReference>
<dbReference type="InterPro" id="IPR029058">
    <property type="entry name" value="AB_hydrolase_fold"/>
</dbReference>
<dbReference type="InterPro" id="IPR008220">
    <property type="entry name" value="HAT_MetX-like"/>
</dbReference>
<dbReference type="NCBIfam" id="TIGR01392">
    <property type="entry name" value="homoserO_Ac_trn"/>
    <property type="match status" value="1"/>
</dbReference>
<dbReference type="NCBIfam" id="NF001209">
    <property type="entry name" value="PRK00175.1"/>
    <property type="match status" value="1"/>
</dbReference>
<dbReference type="PANTHER" id="PTHR32268">
    <property type="entry name" value="HOMOSERINE O-ACETYLTRANSFERASE"/>
    <property type="match status" value="1"/>
</dbReference>
<dbReference type="PANTHER" id="PTHR32268:SF11">
    <property type="entry name" value="HOMOSERINE O-ACETYLTRANSFERASE"/>
    <property type="match status" value="1"/>
</dbReference>
<dbReference type="Pfam" id="PF00561">
    <property type="entry name" value="Abhydrolase_1"/>
    <property type="match status" value="1"/>
</dbReference>
<dbReference type="PIRSF" id="PIRSF000443">
    <property type="entry name" value="Homoser_Ac_trans"/>
    <property type="match status" value="1"/>
</dbReference>
<dbReference type="SUPFAM" id="SSF53474">
    <property type="entry name" value="alpha/beta-Hydrolases"/>
    <property type="match status" value="1"/>
</dbReference>